<feature type="transit peptide" description="Mitochondrion" evidence="1">
    <location>
        <begin position="1"/>
        <end position="30"/>
    </location>
</feature>
<feature type="chain" id="PRO_0000020449" description="Pyruvate dehydrogenase E1 component subunit alpha, testis-specific form, mitochondrial">
    <location>
        <begin position="31"/>
        <end position="391"/>
    </location>
</feature>
<feature type="binding site" evidence="2">
    <location>
        <position position="93"/>
    </location>
    <ligand>
        <name>pyruvate</name>
        <dbReference type="ChEBI" id="CHEBI:15361"/>
    </ligand>
</feature>
<feature type="binding site" evidence="2">
    <location>
        <position position="119"/>
    </location>
    <ligand>
        <name>pyruvate</name>
        <dbReference type="ChEBI" id="CHEBI:15361"/>
    </ligand>
</feature>
<feature type="binding site" evidence="2">
    <location>
        <position position="119"/>
    </location>
    <ligand>
        <name>thiamine diphosphate</name>
        <dbReference type="ChEBI" id="CHEBI:58937"/>
        <note>ligand shared with beta subunit</note>
    </ligand>
</feature>
<feature type="binding site" evidence="2">
    <location>
        <position position="120"/>
    </location>
    <ligand>
        <name>pyruvate</name>
        <dbReference type="ChEBI" id="CHEBI:15361"/>
    </ligand>
</feature>
<feature type="binding site" evidence="2">
    <location>
        <position position="120"/>
    </location>
    <ligand>
        <name>thiamine diphosphate</name>
        <dbReference type="ChEBI" id="CHEBI:58937"/>
        <note>ligand shared with beta subunit</note>
    </ligand>
</feature>
<feature type="binding site" evidence="2">
    <location>
        <position position="158"/>
    </location>
    <ligand>
        <name>pyruvate</name>
        <dbReference type="ChEBI" id="CHEBI:15361"/>
    </ligand>
</feature>
<feature type="binding site" evidence="2">
    <location>
        <position position="166"/>
    </location>
    <ligand>
        <name>pyruvate</name>
        <dbReference type="ChEBI" id="CHEBI:15361"/>
    </ligand>
</feature>
<feature type="binding site" evidence="2">
    <location>
        <position position="166"/>
    </location>
    <ligand>
        <name>thiamine diphosphate</name>
        <dbReference type="ChEBI" id="CHEBI:58937"/>
        <note>ligand shared with beta subunit</note>
    </ligand>
</feature>
<feature type="binding site" evidence="2">
    <location>
        <position position="168"/>
    </location>
    <ligand>
        <name>pyruvate</name>
        <dbReference type="ChEBI" id="CHEBI:15361"/>
    </ligand>
</feature>
<feature type="binding site" evidence="2">
    <location>
        <position position="168"/>
    </location>
    <ligand>
        <name>thiamine diphosphate</name>
        <dbReference type="ChEBI" id="CHEBI:58937"/>
        <note>ligand shared with beta subunit</note>
    </ligand>
</feature>
<feature type="binding site" evidence="2">
    <location>
        <position position="197"/>
    </location>
    <ligand>
        <name>Mg(2+)</name>
        <dbReference type="ChEBI" id="CHEBI:18420"/>
    </ligand>
</feature>
<feature type="binding site" evidence="2">
    <location>
        <position position="197"/>
    </location>
    <ligand>
        <name>pyruvate</name>
        <dbReference type="ChEBI" id="CHEBI:15361"/>
    </ligand>
</feature>
<feature type="binding site" evidence="2">
    <location>
        <position position="197"/>
    </location>
    <ligand>
        <name>thiamine diphosphate</name>
        <dbReference type="ChEBI" id="CHEBI:58937"/>
        <note>ligand shared with beta subunit</note>
    </ligand>
</feature>
<feature type="binding site" evidence="2">
    <location>
        <position position="198"/>
    </location>
    <ligand>
        <name>pyruvate</name>
        <dbReference type="ChEBI" id="CHEBI:15361"/>
    </ligand>
</feature>
<feature type="binding site" evidence="2">
    <location>
        <position position="198"/>
    </location>
    <ligand>
        <name>thiamine diphosphate</name>
        <dbReference type="ChEBI" id="CHEBI:58937"/>
        <note>ligand shared with beta subunit</note>
    </ligand>
</feature>
<feature type="binding site" evidence="2">
    <location>
        <position position="199"/>
    </location>
    <ligand>
        <name>pyruvate</name>
        <dbReference type="ChEBI" id="CHEBI:15361"/>
    </ligand>
</feature>
<feature type="binding site" evidence="2">
    <location>
        <position position="199"/>
    </location>
    <ligand>
        <name>thiamine diphosphate</name>
        <dbReference type="ChEBI" id="CHEBI:58937"/>
        <note>ligand shared with beta subunit</note>
    </ligand>
</feature>
<feature type="binding site" evidence="2">
    <location>
        <position position="226"/>
    </location>
    <ligand>
        <name>Mg(2+)</name>
        <dbReference type="ChEBI" id="CHEBI:18420"/>
    </ligand>
</feature>
<feature type="binding site" evidence="2">
    <location>
        <position position="226"/>
    </location>
    <ligand>
        <name>pyruvate</name>
        <dbReference type="ChEBI" id="CHEBI:15361"/>
    </ligand>
</feature>
<feature type="binding site" evidence="2">
    <location>
        <position position="226"/>
    </location>
    <ligand>
        <name>thiamine diphosphate</name>
        <dbReference type="ChEBI" id="CHEBI:58937"/>
        <note>ligand shared with beta subunit</note>
    </ligand>
</feature>
<feature type="binding site" evidence="2">
    <location>
        <position position="228"/>
    </location>
    <ligand>
        <name>Mg(2+)</name>
        <dbReference type="ChEBI" id="CHEBI:18420"/>
    </ligand>
</feature>
<feature type="binding site" evidence="2">
    <location>
        <position position="228"/>
    </location>
    <ligand>
        <name>pyruvate</name>
        <dbReference type="ChEBI" id="CHEBI:15361"/>
    </ligand>
</feature>
<feature type="binding site" evidence="2">
    <location>
        <position position="293"/>
    </location>
    <ligand>
        <name>thiamine diphosphate</name>
        <dbReference type="ChEBI" id="CHEBI:58937"/>
        <note>ligand shared with beta subunit</note>
    </ligand>
</feature>
<feature type="modified residue" description="Phosphoserine" evidence="5">
    <location>
        <position position="294"/>
    </location>
</feature>
<feature type="modified residue" description="Phosphoserine" evidence="3">
    <location>
        <position position="296"/>
    </location>
</feature>
<feature type="modified residue" description="Phosphoserine; by PDK3" evidence="3">
    <location>
        <position position="301"/>
    </location>
</feature>
<dbReference type="EC" id="1.2.4.1"/>
<dbReference type="EMBL" id="Z18878">
    <property type="protein sequence ID" value="CAA79318.1"/>
    <property type="molecule type" value="mRNA"/>
</dbReference>
<dbReference type="EMBL" id="U44125">
    <property type="protein sequence ID" value="AAB68458.1"/>
    <property type="molecule type" value="mRNA"/>
</dbReference>
<dbReference type="EMBL" id="BC078757">
    <property type="protein sequence ID" value="AAH78757.1"/>
    <property type="molecule type" value="mRNA"/>
</dbReference>
<dbReference type="PIR" id="S31416">
    <property type="entry name" value="S31416"/>
</dbReference>
<dbReference type="RefSeq" id="NP_446446.1">
    <property type="nucleotide sequence ID" value="NM_053994.2"/>
</dbReference>
<dbReference type="SMR" id="Q06437"/>
<dbReference type="FunCoup" id="Q06437">
    <property type="interactions" value="537"/>
</dbReference>
<dbReference type="STRING" id="10116.ENSRNOP00000071767"/>
<dbReference type="iPTMnet" id="Q06437"/>
<dbReference type="PhosphoSitePlus" id="Q06437"/>
<dbReference type="GeneID" id="117098"/>
<dbReference type="KEGG" id="rno:117098"/>
<dbReference type="AGR" id="RGD:620095"/>
<dbReference type="CTD" id="5161"/>
<dbReference type="RGD" id="620095">
    <property type="gene designation" value="Pdha2"/>
</dbReference>
<dbReference type="HOGENOM" id="CLU_029393_5_2_1"/>
<dbReference type="InParanoid" id="Q06437"/>
<dbReference type="OrthoDB" id="10256198at2759"/>
<dbReference type="PhylomeDB" id="Q06437"/>
<dbReference type="Reactome" id="R-RNO-204174">
    <property type="pathway name" value="Regulation of pyruvate dehydrogenase (PDH) complex"/>
</dbReference>
<dbReference type="Reactome" id="R-RNO-5362517">
    <property type="pathway name" value="Signaling by Retinoic Acid"/>
</dbReference>
<dbReference type="Reactome" id="R-RNO-9861559">
    <property type="pathway name" value="PDH complex synthesizes acetyl-CoA from PYR"/>
</dbReference>
<dbReference type="SABIO-RK" id="Q06437"/>
<dbReference type="PRO" id="PR:Q06437"/>
<dbReference type="Proteomes" id="UP000002494">
    <property type="component" value="Chromosome 2"/>
</dbReference>
<dbReference type="Bgee" id="ENSRNOG00000016223">
    <property type="expression patterns" value="Expressed in testis"/>
</dbReference>
<dbReference type="GO" id="GO:0005759">
    <property type="term" value="C:mitochondrial matrix"/>
    <property type="evidence" value="ECO:0007669"/>
    <property type="project" value="UniProtKB-SubCell"/>
</dbReference>
<dbReference type="GO" id="GO:0005730">
    <property type="term" value="C:nucleolus"/>
    <property type="evidence" value="ECO:0007669"/>
    <property type="project" value="Ensembl"/>
</dbReference>
<dbReference type="GO" id="GO:0045254">
    <property type="term" value="C:pyruvate dehydrogenase complex"/>
    <property type="evidence" value="ECO:0000314"/>
    <property type="project" value="RGD"/>
</dbReference>
<dbReference type="GO" id="GO:0046872">
    <property type="term" value="F:metal ion binding"/>
    <property type="evidence" value="ECO:0007669"/>
    <property type="project" value="UniProtKB-KW"/>
</dbReference>
<dbReference type="GO" id="GO:0004739">
    <property type="term" value="F:pyruvate dehydrogenase (acetyl-transferring) activity"/>
    <property type="evidence" value="ECO:0000314"/>
    <property type="project" value="RGD"/>
</dbReference>
<dbReference type="GO" id="GO:0034604">
    <property type="term" value="F:pyruvate dehydrogenase (NAD+) activity"/>
    <property type="evidence" value="ECO:0000266"/>
    <property type="project" value="RGD"/>
</dbReference>
<dbReference type="GO" id="GO:0006006">
    <property type="term" value="P:glucose metabolic process"/>
    <property type="evidence" value="ECO:0007669"/>
    <property type="project" value="UniProtKB-KW"/>
</dbReference>
<dbReference type="GO" id="GO:0006086">
    <property type="term" value="P:pyruvate decarboxylation to acetyl-CoA"/>
    <property type="evidence" value="ECO:0000314"/>
    <property type="project" value="RGD"/>
</dbReference>
<dbReference type="GO" id="GO:0006090">
    <property type="term" value="P:pyruvate metabolic process"/>
    <property type="evidence" value="ECO:0000250"/>
    <property type="project" value="UniProtKB"/>
</dbReference>
<dbReference type="GO" id="GO:0006099">
    <property type="term" value="P:tricarboxylic acid cycle"/>
    <property type="evidence" value="ECO:0007669"/>
    <property type="project" value="UniProtKB-KW"/>
</dbReference>
<dbReference type="CDD" id="cd02000">
    <property type="entry name" value="TPP_E1_PDC_ADC_BCADC"/>
    <property type="match status" value="1"/>
</dbReference>
<dbReference type="FunFam" id="3.40.50.970:FF:000013">
    <property type="entry name" value="Pyruvate dehydrogenase E1 component subunit alpha"/>
    <property type="match status" value="1"/>
</dbReference>
<dbReference type="Gene3D" id="3.40.50.970">
    <property type="match status" value="1"/>
</dbReference>
<dbReference type="InterPro" id="IPR001017">
    <property type="entry name" value="DH_E1"/>
</dbReference>
<dbReference type="InterPro" id="IPR050642">
    <property type="entry name" value="PDH_E1_Alpha_Subunit"/>
</dbReference>
<dbReference type="InterPro" id="IPR017597">
    <property type="entry name" value="Pyrv_DH_E1_asu_subgrp-y"/>
</dbReference>
<dbReference type="InterPro" id="IPR029061">
    <property type="entry name" value="THDP-binding"/>
</dbReference>
<dbReference type="NCBIfam" id="TIGR03182">
    <property type="entry name" value="PDH_E1_alph_y"/>
    <property type="match status" value="1"/>
</dbReference>
<dbReference type="PANTHER" id="PTHR11516:SF23">
    <property type="entry name" value="PYRUVATE DEHYDROGENASE E1 COMPONENT SUBUNIT ALPHA, TESTIS-SPECIFIC FORM, MITOCHONDRIAL"/>
    <property type="match status" value="1"/>
</dbReference>
<dbReference type="PANTHER" id="PTHR11516">
    <property type="entry name" value="PYRUVATE DEHYDROGENASE E1 COMPONENT, ALPHA SUBUNIT BACTERIAL AND ORGANELLAR"/>
    <property type="match status" value="1"/>
</dbReference>
<dbReference type="Pfam" id="PF00676">
    <property type="entry name" value="E1_dh"/>
    <property type="match status" value="1"/>
</dbReference>
<dbReference type="SUPFAM" id="SSF52518">
    <property type="entry name" value="Thiamin diphosphate-binding fold (THDP-binding)"/>
    <property type="match status" value="1"/>
</dbReference>
<organism>
    <name type="scientific">Rattus norvegicus</name>
    <name type="common">Rat</name>
    <dbReference type="NCBI Taxonomy" id="10116"/>
    <lineage>
        <taxon>Eukaryota</taxon>
        <taxon>Metazoa</taxon>
        <taxon>Chordata</taxon>
        <taxon>Craniata</taxon>
        <taxon>Vertebrata</taxon>
        <taxon>Euteleostomi</taxon>
        <taxon>Mammalia</taxon>
        <taxon>Eutheria</taxon>
        <taxon>Euarchontoglires</taxon>
        <taxon>Glires</taxon>
        <taxon>Rodentia</taxon>
        <taxon>Myomorpha</taxon>
        <taxon>Muroidea</taxon>
        <taxon>Muridae</taxon>
        <taxon>Murinae</taxon>
        <taxon>Rattus</taxon>
    </lineage>
</organism>
<reference key="1">
    <citation type="journal article" date="1993" name="Biochim. Biophys. Acta">
        <title>Characterization of cDNAs encoding the rat testis-specific E1 alpha subunit of the pyruvate dehydrogenase complex: comparison of expression of the corresponding mRNA with that of the somatic E1 alpha subunit.</title>
        <authorList>
            <person name="Cullingford T.E."/>
            <person name="Clark J.B."/>
            <person name="Phillips I.R."/>
        </authorList>
    </citation>
    <scope>NUCLEOTIDE SEQUENCE [MRNA]</scope>
    <source>
        <tissue>Testis</tissue>
    </source>
</reference>
<reference key="2">
    <citation type="journal article" date="1998" name="Comp. Biochem. Physiol.">
        <title>Pyruvate dehydrogenase E1 alpha isoform in rat testis: cDNA cloning, characterization, and biochemical comparison of the recombinant testis and liver enzymes.</title>
        <authorList>
            <person name="Jeng J."/>
            <person name="Kallarakal A.T."/>
            <person name="Kim S.F."/>
            <person name="Popov K.M."/>
            <person name="Song B.J."/>
        </authorList>
    </citation>
    <scope>NUCLEOTIDE SEQUENCE [MRNA]</scope>
    <scope>CATALYTIC ACTIVITY</scope>
    <scope>FUNCTION</scope>
    <scope>PHOSPHORYLATION</scope>
    <scope>TISSUE SPECIFICITY</scope>
    <source>
        <strain>Sprague-Dawley</strain>
        <tissue>Testis</tissue>
    </source>
</reference>
<reference key="3">
    <citation type="journal article" date="2004" name="Genome Res.">
        <title>The status, quality, and expansion of the NIH full-length cDNA project: the Mammalian Gene Collection (MGC).</title>
        <authorList>
            <consortium name="The MGC Project Team"/>
        </authorList>
    </citation>
    <scope>NUCLEOTIDE SEQUENCE [LARGE SCALE MRNA]</scope>
    <source>
        <tissue>Testis</tissue>
    </source>
</reference>
<reference key="4">
    <citation type="journal article" date="2012" name="Nat. Commun.">
        <title>Quantitative maps of protein phosphorylation sites across 14 different rat organs and tissues.</title>
        <authorList>
            <person name="Lundby A."/>
            <person name="Secher A."/>
            <person name="Lage K."/>
            <person name="Nordsborg N.B."/>
            <person name="Dmytriyev A."/>
            <person name="Lundby C."/>
            <person name="Olsen J.V."/>
        </authorList>
    </citation>
    <scope>PHOSPHORYLATION [LARGE SCALE ANALYSIS] AT SER-294</scope>
    <scope>IDENTIFICATION BY MASS SPECTROMETRY [LARGE SCALE ANALYSIS]</scope>
</reference>
<name>ODPAT_RAT</name>
<proteinExistence type="evidence at protein level"/>
<sequence length="391" mass="43393">MRKMLATVLSQVFSGMVQKPALRGLLSSLKFSNDATCDIKKCDLYLLEQGPPTSTVLTREEALKYYRNMQVIRRMELKADQLYKQKFIRGFCHLCDGQEACNVGLEAGINPTDHIITSYRAHGLCYTRGLSVKSILAELTGRKGGCAKGKGGSMHMYAKNFYGGNGIVGAQVPLGAGVALACKYLKNGQICLALYGDGAANQGQVFEAYNMSALWKLPCVFICENNRYGMGTAIERSAASTDYHKKGFVIPGLRVNGMDILSVREATKFAADHCRSGKGPIVMELQTYRYHGHSMSDPGISYRTREEVQNVRSKSDPIMLLRERMISNNLSSVEELKEIDADVKKEVEEAAQFATTDPEPPLEDLANYLYHQNPPFEVRGAHKWLKFKSVS</sequence>
<keyword id="KW-0119">Carbohydrate metabolism</keyword>
<keyword id="KW-0313">Glucose metabolism</keyword>
<keyword id="KW-0460">Magnesium</keyword>
<keyword id="KW-0479">Metal-binding</keyword>
<keyword id="KW-0496">Mitochondrion</keyword>
<keyword id="KW-0560">Oxidoreductase</keyword>
<keyword id="KW-0597">Phosphoprotein</keyword>
<keyword id="KW-0670">Pyruvate</keyword>
<keyword id="KW-1185">Reference proteome</keyword>
<keyword id="KW-0786">Thiamine pyrophosphate</keyword>
<keyword id="KW-0809">Transit peptide</keyword>
<keyword id="KW-0816">Tricarboxylic acid cycle</keyword>
<accession>Q06437</accession>
<comment type="function">
    <text evidence="4">The pyruvate dehydrogenase complex catalyzes the overall conversion of pyruvate to acetyl-CoA and CO(2), and thereby links the glycolytic pathway to the tricarboxylic cycle.</text>
</comment>
<comment type="catalytic activity">
    <reaction evidence="4">
        <text>N(6)-[(R)-lipoyl]-L-lysyl-[protein] + pyruvate + H(+) = N(6)-[(R)-S(8)-acetyldihydrolipoyl]-L-lysyl-[protein] + CO2</text>
        <dbReference type="Rhea" id="RHEA:19189"/>
        <dbReference type="Rhea" id="RHEA-COMP:10474"/>
        <dbReference type="Rhea" id="RHEA-COMP:10478"/>
        <dbReference type="ChEBI" id="CHEBI:15361"/>
        <dbReference type="ChEBI" id="CHEBI:15378"/>
        <dbReference type="ChEBI" id="CHEBI:16526"/>
        <dbReference type="ChEBI" id="CHEBI:83099"/>
        <dbReference type="ChEBI" id="CHEBI:83111"/>
        <dbReference type="EC" id="1.2.4.1"/>
    </reaction>
</comment>
<comment type="cofactor">
    <cofactor evidence="2">
        <name>thiamine diphosphate</name>
        <dbReference type="ChEBI" id="CHEBI:58937"/>
    </cofactor>
    <cofactor evidence="2">
        <name>Mg(2+)</name>
        <dbReference type="ChEBI" id="CHEBI:18420"/>
    </cofactor>
</comment>
<comment type="activity regulation">
    <text evidence="1">Pyruvate dehydrogenase activity is inhibited by phosphorylation of PDHA2; it is reactivated by dephosphorylation.</text>
</comment>
<comment type="subunit">
    <text evidence="1">Heterotetramer of two PDHA2 and two PDHB subunits. The heterotetramer interacts with DLAT, and is part of the multimeric pyruvate dehydrogenase complex that contains multiple copies of pyruvate dehydrogenase (E1), dihydrolipoamide acetyltransferase (DLAT, E2) and lipoamide dehydrogenase (DLD, E3). These subunits are bound to an inner core composed of about 48 DLAT and 12 PDHX molecules (By similarity).</text>
</comment>
<comment type="subcellular location">
    <subcellularLocation>
        <location evidence="1">Mitochondrion matrix</location>
    </subcellularLocation>
</comment>
<comment type="tissue specificity">
    <text evidence="4">Testis.</text>
</comment>
<evidence type="ECO:0000250" key="1"/>
<evidence type="ECO:0000250" key="2">
    <source>
        <dbReference type="UniProtKB" id="P08559"/>
    </source>
</evidence>
<evidence type="ECO:0000250" key="3">
    <source>
        <dbReference type="UniProtKB" id="P29803"/>
    </source>
</evidence>
<evidence type="ECO:0000269" key="4">
    <source>
    </source>
</evidence>
<evidence type="ECO:0007744" key="5">
    <source>
    </source>
</evidence>
<protein>
    <recommendedName>
        <fullName>Pyruvate dehydrogenase E1 component subunit alpha, testis-specific form, mitochondrial</fullName>
        <ecNumber>1.2.4.1</ecNumber>
    </recommendedName>
    <alternativeName>
        <fullName>PDHE1-A type II</fullName>
    </alternativeName>
</protein>
<gene>
    <name type="primary">Pdha2</name>
</gene>